<proteinExistence type="inferred from homology"/>
<keyword id="KW-0687">Ribonucleoprotein</keyword>
<keyword id="KW-0689">Ribosomal protein</keyword>
<keyword id="KW-0694">RNA-binding</keyword>
<keyword id="KW-0699">rRNA-binding</keyword>
<organism>
    <name type="scientific">Synechococcus sp. (strain CC9605)</name>
    <dbReference type="NCBI Taxonomy" id="110662"/>
    <lineage>
        <taxon>Bacteria</taxon>
        <taxon>Bacillati</taxon>
        <taxon>Cyanobacteriota</taxon>
        <taxon>Cyanophyceae</taxon>
        <taxon>Synechococcales</taxon>
        <taxon>Synechococcaceae</taxon>
        <taxon>Synechococcus</taxon>
    </lineage>
</organism>
<evidence type="ECO:0000255" key="1">
    <source>
        <dbReference type="HAMAP-Rule" id="MF_01307"/>
    </source>
</evidence>
<evidence type="ECO:0000256" key="2">
    <source>
        <dbReference type="SAM" id="MobiDB-lite"/>
    </source>
</evidence>
<evidence type="ECO:0000305" key="3"/>
<feature type="chain" id="PRO_1000086071" description="Small ribosomal subunit protein uS5">
    <location>
        <begin position="1"/>
        <end position="214"/>
    </location>
</feature>
<feature type="domain" description="S5 DRBM" evidence="1">
    <location>
        <begin position="58"/>
        <end position="121"/>
    </location>
</feature>
<feature type="region of interest" description="Disordered" evidence="2">
    <location>
        <begin position="1"/>
        <end position="61"/>
    </location>
</feature>
<feature type="compositionally biased region" description="Low complexity" evidence="2">
    <location>
        <begin position="9"/>
        <end position="29"/>
    </location>
</feature>
<feature type="compositionally biased region" description="Basic and acidic residues" evidence="2">
    <location>
        <begin position="30"/>
        <end position="60"/>
    </location>
</feature>
<accession>Q3AMP6</accession>
<sequence length="214" mass="22645">MTDSSPQSNPNAVPGAADVPAAAEGQQQQEQRRGRGDRDGRRGDRRGGRRGQERDSEWQERVVQIRRVSKTVKGGKKMSFRAIVVVGNEKGQVGVGVGKAGDVIGAVRKGVADGKKHLVKVPLTRHNSIPTLSNGRDGAASVLIRPAAPGTGVIAGGSIRTVLELAGIKNVLAKRLGSKTPLNNARAAMVALSLLRTHKETAKERGISLEQIYS</sequence>
<gene>
    <name evidence="1" type="primary">rpsE</name>
    <name evidence="1" type="synonym">rps5</name>
    <name type="ordered locus">Syncc9605_0360</name>
</gene>
<protein>
    <recommendedName>
        <fullName evidence="1">Small ribosomal subunit protein uS5</fullName>
    </recommendedName>
    <alternativeName>
        <fullName evidence="3">30S ribosomal protein S5</fullName>
    </alternativeName>
</protein>
<name>RS5_SYNSC</name>
<comment type="function">
    <text evidence="1">With S4 and S12 plays an important role in translational accuracy.</text>
</comment>
<comment type="function">
    <text evidence="1">Located at the back of the 30S subunit body where it stabilizes the conformation of the head with respect to the body.</text>
</comment>
<comment type="subunit">
    <text evidence="1">Part of the 30S ribosomal subunit. Contacts proteins S4 and S8.</text>
</comment>
<comment type="domain">
    <text>The N-terminal domain interacts with the head of the 30S subunit; the C-terminal domain interacts with the body and contacts protein S4. The interaction surface between S4 and S5 is involved in control of translational fidelity.</text>
</comment>
<comment type="similarity">
    <text evidence="1">Belongs to the universal ribosomal protein uS5 family.</text>
</comment>
<dbReference type="EMBL" id="CP000110">
    <property type="protein sequence ID" value="ABB34136.1"/>
    <property type="molecule type" value="Genomic_DNA"/>
</dbReference>
<dbReference type="RefSeq" id="WP_011363379.1">
    <property type="nucleotide sequence ID" value="NC_007516.1"/>
</dbReference>
<dbReference type="SMR" id="Q3AMP6"/>
<dbReference type="STRING" id="110662.Syncc9605_0360"/>
<dbReference type="KEGG" id="syd:Syncc9605_0360"/>
<dbReference type="eggNOG" id="COG0098">
    <property type="taxonomic scope" value="Bacteria"/>
</dbReference>
<dbReference type="HOGENOM" id="CLU_065898_2_1_3"/>
<dbReference type="OrthoDB" id="9809045at2"/>
<dbReference type="GO" id="GO:0015935">
    <property type="term" value="C:small ribosomal subunit"/>
    <property type="evidence" value="ECO:0007669"/>
    <property type="project" value="InterPro"/>
</dbReference>
<dbReference type="GO" id="GO:0019843">
    <property type="term" value="F:rRNA binding"/>
    <property type="evidence" value="ECO:0007669"/>
    <property type="project" value="UniProtKB-UniRule"/>
</dbReference>
<dbReference type="GO" id="GO:0003735">
    <property type="term" value="F:structural constituent of ribosome"/>
    <property type="evidence" value="ECO:0007669"/>
    <property type="project" value="InterPro"/>
</dbReference>
<dbReference type="GO" id="GO:0006412">
    <property type="term" value="P:translation"/>
    <property type="evidence" value="ECO:0007669"/>
    <property type="project" value="UniProtKB-UniRule"/>
</dbReference>
<dbReference type="FunFam" id="3.30.230.10:FF:000002">
    <property type="entry name" value="30S ribosomal protein S5"/>
    <property type="match status" value="1"/>
</dbReference>
<dbReference type="Gene3D" id="3.30.160.20">
    <property type="match status" value="1"/>
</dbReference>
<dbReference type="Gene3D" id="3.30.230.10">
    <property type="match status" value="1"/>
</dbReference>
<dbReference type="HAMAP" id="MF_01307_B">
    <property type="entry name" value="Ribosomal_uS5_B"/>
    <property type="match status" value="1"/>
</dbReference>
<dbReference type="InterPro" id="IPR020568">
    <property type="entry name" value="Ribosomal_Su5_D2-typ_SF"/>
</dbReference>
<dbReference type="InterPro" id="IPR000851">
    <property type="entry name" value="Ribosomal_uS5"/>
</dbReference>
<dbReference type="InterPro" id="IPR005712">
    <property type="entry name" value="Ribosomal_uS5_bac-type"/>
</dbReference>
<dbReference type="InterPro" id="IPR005324">
    <property type="entry name" value="Ribosomal_uS5_C"/>
</dbReference>
<dbReference type="InterPro" id="IPR013810">
    <property type="entry name" value="Ribosomal_uS5_N"/>
</dbReference>
<dbReference type="InterPro" id="IPR018192">
    <property type="entry name" value="Ribosomal_uS5_N_CS"/>
</dbReference>
<dbReference type="InterPro" id="IPR014721">
    <property type="entry name" value="Ribsml_uS5_D2-typ_fold_subgr"/>
</dbReference>
<dbReference type="NCBIfam" id="TIGR01021">
    <property type="entry name" value="rpsE_bact"/>
    <property type="match status" value="1"/>
</dbReference>
<dbReference type="PANTHER" id="PTHR48277">
    <property type="entry name" value="MITOCHONDRIAL RIBOSOMAL PROTEIN S5"/>
    <property type="match status" value="1"/>
</dbReference>
<dbReference type="PANTHER" id="PTHR48277:SF1">
    <property type="entry name" value="MITOCHONDRIAL RIBOSOMAL PROTEIN S5"/>
    <property type="match status" value="1"/>
</dbReference>
<dbReference type="Pfam" id="PF00333">
    <property type="entry name" value="Ribosomal_S5"/>
    <property type="match status" value="1"/>
</dbReference>
<dbReference type="Pfam" id="PF03719">
    <property type="entry name" value="Ribosomal_S5_C"/>
    <property type="match status" value="1"/>
</dbReference>
<dbReference type="SUPFAM" id="SSF54768">
    <property type="entry name" value="dsRNA-binding domain-like"/>
    <property type="match status" value="1"/>
</dbReference>
<dbReference type="SUPFAM" id="SSF54211">
    <property type="entry name" value="Ribosomal protein S5 domain 2-like"/>
    <property type="match status" value="1"/>
</dbReference>
<dbReference type="PROSITE" id="PS00585">
    <property type="entry name" value="RIBOSOMAL_S5"/>
    <property type="match status" value="1"/>
</dbReference>
<dbReference type="PROSITE" id="PS50881">
    <property type="entry name" value="S5_DSRBD"/>
    <property type="match status" value="1"/>
</dbReference>
<reference key="1">
    <citation type="submission" date="2005-07" db="EMBL/GenBank/DDBJ databases">
        <title>Complete sequence of Synechococcus sp. CC9605.</title>
        <authorList>
            <consortium name="US DOE Joint Genome Institute"/>
            <person name="Copeland A."/>
            <person name="Lucas S."/>
            <person name="Lapidus A."/>
            <person name="Barry K."/>
            <person name="Detter J.C."/>
            <person name="Glavina T."/>
            <person name="Hammon N."/>
            <person name="Israni S."/>
            <person name="Pitluck S."/>
            <person name="Schmutz J."/>
            <person name="Martinez M."/>
            <person name="Larimer F."/>
            <person name="Land M."/>
            <person name="Kyrpides N."/>
            <person name="Ivanova N."/>
            <person name="Richardson P."/>
        </authorList>
    </citation>
    <scope>NUCLEOTIDE SEQUENCE [LARGE SCALE GENOMIC DNA]</scope>
    <source>
        <strain>CC9605</strain>
    </source>
</reference>